<proteinExistence type="inferred from homology"/>
<name>THII_LISMC</name>
<comment type="function">
    <text evidence="1">Catalyzes the ATP-dependent transfer of a sulfur to tRNA to produce 4-thiouridine in position 8 of tRNAs, which functions as a near-UV photosensor. Also catalyzes the transfer of sulfur to the sulfur carrier protein ThiS, forming ThiS-thiocarboxylate. This is a step in the synthesis of thiazole, in the thiamine biosynthesis pathway. The sulfur is donated as persulfide by IscS.</text>
</comment>
<comment type="catalytic activity">
    <reaction evidence="1">
        <text>[ThiI sulfur-carrier protein]-S-sulfanyl-L-cysteine + a uridine in tRNA + 2 reduced [2Fe-2S]-[ferredoxin] + ATP + H(+) = [ThiI sulfur-carrier protein]-L-cysteine + a 4-thiouridine in tRNA + 2 oxidized [2Fe-2S]-[ferredoxin] + AMP + diphosphate</text>
        <dbReference type="Rhea" id="RHEA:24176"/>
        <dbReference type="Rhea" id="RHEA-COMP:10000"/>
        <dbReference type="Rhea" id="RHEA-COMP:10001"/>
        <dbReference type="Rhea" id="RHEA-COMP:13337"/>
        <dbReference type="Rhea" id="RHEA-COMP:13338"/>
        <dbReference type="Rhea" id="RHEA-COMP:13339"/>
        <dbReference type="Rhea" id="RHEA-COMP:13340"/>
        <dbReference type="ChEBI" id="CHEBI:15378"/>
        <dbReference type="ChEBI" id="CHEBI:29950"/>
        <dbReference type="ChEBI" id="CHEBI:30616"/>
        <dbReference type="ChEBI" id="CHEBI:33019"/>
        <dbReference type="ChEBI" id="CHEBI:33737"/>
        <dbReference type="ChEBI" id="CHEBI:33738"/>
        <dbReference type="ChEBI" id="CHEBI:61963"/>
        <dbReference type="ChEBI" id="CHEBI:65315"/>
        <dbReference type="ChEBI" id="CHEBI:136798"/>
        <dbReference type="ChEBI" id="CHEBI:456215"/>
        <dbReference type="EC" id="2.8.1.4"/>
    </reaction>
</comment>
<comment type="catalytic activity">
    <reaction evidence="1">
        <text>[ThiS sulfur-carrier protein]-C-terminal Gly-Gly-AMP + S-sulfanyl-L-cysteinyl-[cysteine desulfurase] + AH2 = [ThiS sulfur-carrier protein]-C-terminal-Gly-aminoethanethioate + L-cysteinyl-[cysteine desulfurase] + A + AMP + 2 H(+)</text>
        <dbReference type="Rhea" id="RHEA:43340"/>
        <dbReference type="Rhea" id="RHEA-COMP:12157"/>
        <dbReference type="Rhea" id="RHEA-COMP:12158"/>
        <dbReference type="Rhea" id="RHEA-COMP:12910"/>
        <dbReference type="Rhea" id="RHEA-COMP:19908"/>
        <dbReference type="ChEBI" id="CHEBI:13193"/>
        <dbReference type="ChEBI" id="CHEBI:15378"/>
        <dbReference type="ChEBI" id="CHEBI:17499"/>
        <dbReference type="ChEBI" id="CHEBI:29950"/>
        <dbReference type="ChEBI" id="CHEBI:61963"/>
        <dbReference type="ChEBI" id="CHEBI:90618"/>
        <dbReference type="ChEBI" id="CHEBI:232372"/>
        <dbReference type="ChEBI" id="CHEBI:456215"/>
    </reaction>
</comment>
<comment type="pathway">
    <text evidence="1">Cofactor biosynthesis; thiamine diphosphate biosynthesis.</text>
</comment>
<comment type="subcellular location">
    <subcellularLocation>
        <location evidence="1">Cytoplasm</location>
    </subcellularLocation>
</comment>
<comment type="similarity">
    <text evidence="1">Belongs to the ThiI family.</text>
</comment>
<gene>
    <name evidence="1" type="primary">thiI</name>
    <name type="ordered locus">Lm4b_01603</name>
</gene>
<accession>C1KVN9</accession>
<dbReference type="EC" id="2.8.1.4" evidence="1"/>
<dbReference type="EMBL" id="FM242711">
    <property type="protein sequence ID" value="CAS05364.1"/>
    <property type="molecule type" value="Genomic_DNA"/>
</dbReference>
<dbReference type="RefSeq" id="WP_003727373.1">
    <property type="nucleotide sequence ID" value="NC_012488.1"/>
</dbReference>
<dbReference type="SMR" id="C1KVN9"/>
<dbReference type="KEGG" id="lmc:Lm4b_01603"/>
<dbReference type="HOGENOM" id="CLU_037952_4_0_9"/>
<dbReference type="UniPathway" id="UPA00060"/>
<dbReference type="GO" id="GO:0005829">
    <property type="term" value="C:cytosol"/>
    <property type="evidence" value="ECO:0007669"/>
    <property type="project" value="TreeGrafter"/>
</dbReference>
<dbReference type="GO" id="GO:0005524">
    <property type="term" value="F:ATP binding"/>
    <property type="evidence" value="ECO:0007669"/>
    <property type="project" value="UniProtKB-UniRule"/>
</dbReference>
<dbReference type="GO" id="GO:0004810">
    <property type="term" value="F:CCA tRNA nucleotidyltransferase activity"/>
    <property type="evidence" value="ECO:0007669"/>
    <property type="project" value="InterPro"/>
</dbReference>
<dbReference type="GO" id="GO:0000049">
    <property type="term" value="F:tRNA binding"/>
    <property type="evidence" value="ECO:0007669"/>
    <property type="project" value="UniProtKB-UniRule"/>
</dbReference>
<dbReference type="GO" id="GO:0140741">
    <property type="term" value="F:tRNA-uracil-4 sulfurtransferase activity"/>
    <property type="evidence" value="ECO:0007669"/>
    <property type="project" value="UniProtKB-EC"/>
</dbReference>
<dbReference type="GO" id="GO:0009228">
    <property type="term" value="P:thiamine biosynthetic process"/>
    <property type="evidence" value="ECO:0007669"/>
    <property type="project" value="UniProtKB-KW"/>
</dbReference>
<dbReference type="GO" id="GO:0009229">
    <property type="term" value="P:thiamine diphosphate biosynthetic process"/>
    <property type="evidence" value="ECO:0007669"/>
    <property type="project" value="UniProtKB-UniRule"/>
</dbReference>
<dbReference type="GO" id="GO:0052837">
    <property type="term" value="P:thiazole biosynthetic process"/>
    <property type="evidence" value="ECO:0007669"/>
    <property type="project" value="TreeGrafter"/>
</dbReference>
<dbReference type="GO" id="GO:0002937">
    <property type="term" value="P:tRNA 4-thiouridine biosynthesis"/>
    <property type="evidence" value="ECO:0007669"/>
    <property type="project" value="TreeGrafter"/>
</dbReference>
<dbReference type="CDD" id="cd01712">
    <property type="entry name" value="PPase_ThiI"/>
    <property type="match status" value="1"/>
</dbReference>
<dbReference type="CDD" id="cd11716">
    <property type="entry name" value="THUMP_ThiI"/>
    <property type="match status" value="1"/>
</dbReference>
<dbReference type="FunFam" id="3.30.2130.30:FF:000011">
    <property type="entry name" value="Probable tRNA sulfurtransferase"/>
    <property type="match status" value="1"/>
</dbReference>
<dbReference type="FunFam" id="3.40.50.620:FF:000053">
    <property type="entry name" value="Probable tRNA sulfurtransferase"/>
    <property type="match status" value="1"/>
</dbReference>
<dbReference type="Gene3D" id="3.30.2130.30">
    <property type="match status" value="1"/>
</dbReference>
<dbReference type="Gene3D" id="3.40.50.620">
    <property type="entry name" value="HUPs"/>
    <property type="match status" value="1"/>
</dbReference>
<dbReference type="HAMAP" id="MF_00021">
    <property type="entry name" value="ThiI"/>
    <property type="match status" value="1"/>
</dbReference>
<dbReference type="InterPro" id="IPR014729">
    <property type="entry name" value="Rossmann-like_a/b/a_fold"/>
</dbReference>
<dbReference type="InterPro" id="IPR020536">
    <property type="entry name" value="ThiI_AANH"/>
</dbReference>
<dbReference type="InterPro" id="IPR054173">
    <property type="entry name" value="ThiI_fer"/>
</dbReference>
<dbReference type="InterPro" id="IPR049961">
    <property type="entry name" value="ThiI_N"/>
</dbReference>
<dbReference type="InterPro" id="IPR004114">
    <property type="entry name" value="THUMP_dom"/>
</dbReference>
<dbReference type="InterPro" id="IPR049962">
    <property type="entry name" value="THUMP_ThiI"/>
</dbReference>
<dbReference type="InterPro" id="IPR003720">
    <property type="entry name" value="tRNA_STrfase"/>
</dbReference>
<dbReference type="InterPro" id="IPR050102">
    <property type="entry name" value="tRNA_sulfurtransferase_ThiI"/>
</dbReference>
<dbReference type="NCBIfam" id="TIGR00342">
    <property type="entry name" value="tRNA uracil 4-sulfurtransferase ThiI"/>
    <property type="match status" value="1"/>
</dbReference>
<dbReference type="PANTHER" id="PTHR43209">
    <property type="entry name" value="TRNA SULFURTRANSFERASE"/>
    <property type="match status" value="1"/>
</dbReference>
<dbReference type="PANTHER" id="PTHR43209:SF1">
    <property type="entry name" value="TRNA SULFURTRANSFERASE"/>
    <property type="match status" value="1"/>
</dbReference>
<dbReference type="Pfam" id="PF02568">
    <property type="entry name" value="ThiI"/>
    <property type="match status" value="1"/>
</dbReference>
<dbReference type="Pfam" id="PF22025">
    <property type="entry name" value="ThiI_fer"/>
    <property type="match status" value="1"/>
</dbReference>
<dbReference type="Pfam" id="PF02926">
    <property type="entry name" value="THUMP"/>
    <property type="match status" value="1"/>
</dbReference>
<dbReference type="SMART" id="SM00981">
    <property type="entry name" value="THUMP"/>
    <property type="match status" value="1"/>
</dbReference>
<dbReference type="SUPFAM" id="SSF52402">
    <property type="entry name" value="Adenine nucleotide alpha hydrolases-like"/>
    <property type="match status" value="1"/>
</dbReference>
<dbReference type="SUPFAM" id="SSF143437">
    <property type="entry name" value="THUMP domain-like"/>
    <property type="match status" value="1"/>
</dbReference>
<dbReference type="PROSITE" id="PS51165">
    <property type="entry name" value="THUMP"/>
    <property type="match status" value="1"/>
</dbReference>
<sequence>MEFDRMLIRYGELSTKGKNRKQFVTKLAQNVKRAMTDLPEVRIHGERDRMYIILNGADYQLVEERLKPIFGIQSFSPAVRVNLDVEEVKAAALALVQDAHEENGTFKVAARRSHREFPLDSNEINQEIGAYVLQNMEDLTVNVKNPDVKLTIDVRKEGVFLSCRTILGAAGLPVGSSGRAMLMLSGGIDSPVAGYLAQKRGVEIEAVHFHSPPYTSEQAKQKAVDLAAKLAKYSGQVQMHIVPFTEIQEVIKQQIPESVIMTVTRRMMLRITDELRRRRNGLAIVNGESLGQVASQTLESMLAINAVTATPIIRPVVSMDKNEIIQIAQKIDTYNLSVQPFEDCCTIFTPPSPKTKPKLDKIEHYESFTDFEALIAKALDNIETISVNVAETAQVKDEFADLF</sequence>
<feature type="chain" id="PRO_1000201916" description="Probable tRNA sulfurtransferase">
    <location>
        <begin position="1"/>
        <end position="403"/>
    </location>
</feature>
<feature type="domain" description="THUMP" evidence="1">
    <location>
        <begin position="60"/>
        <end position="165"/>
    </location>
</feature>
<feature type="binding site" evidence="1">
    <location>
        <begin position="183"/>
        <end position="184"/>
    </location>
    <ligand>
        <name>ATP</name>
        <dbReference type="ChEBI" id="CHEBI:30616"/>
    </ligand>
</feature>
<feature type="binding site" evidence="1">
    <location>
        <begin position="208"/>
        <end position="209"/>
    </location>
    <ligand>
        <name>ATP</name>
        <dbReference type="ChEBI" id="CHEBI:30616"/>
    </ligand>
</feature>
<feature type="binding site" evidence="1">
    <location>
        <position position="265"/>
    </location>
    <ligand>
        <name>ATP</name>
        <dbReference type="ChEBI" id="CHEBI:30616"/>
    </ligand>
</feature>
<feature type="binding site" evidence="1">
    <location>
        <position position="287"/>
    </location>
    <ligand>
        <name>ATP</name>
        <dbReference type="ChEBI" id="CHEBI:30616"/>
    </ligand>
</feature>
<feature type="binding site" evidence="1">
    <location>
        <position position="296"/>
    </location>
    <ligand>
        <name>ATP</name>
        <dbReference type="ChEBI" id="CHEBI:30616"/>
    </ligand>
</feature>
<evidence type="ECO:0000255" key="1">
    <source>
        <dbReference type="HAMAP-Rule" id="MF_00021"/>
    </source>
</evidence>
<protein>
    <recommendedName>
        <fullName evidence="1">Probable tRNA sulfurtransferase</fullName>
        <ecNumber evidence="1">2.8.1.4</ecNumber>
    </recommendedName>
    <alternativeName>
        <fullName evidence="1">Sulfur carrier protein ThiS sulfurtransferase</fullName>
    </alternativeName>
    <alternativeName>
        <fullName evidence="1">Thiamine biosynthesis protein ThiI</fullName>
    </alternativeName>
    <alternativeName>
        <fullName evidence="1">tRNA 4-thiouridine synthase</fullName>
    </alternativeName>
</protein>
<keyword id="KW-0067">ATP-binding</keyword>
<keyword id="KW-0963">Cytoplasm</keyword>
<keyword id="KW-0547">Nucleotide-binding</keyword>
<keyword id="KW-0694">RNA-binding</keyword>
<keyword id="KW-0784">Thiamine biosynthesis</keyword>
<keyword id="KW-0808">Transferase</keyword>
<keyword id="KW-0820">tRNA-binding</keyword>
<reference key="1">
    <citation type="journal article" date="2012" name="BMC Genomics">
        <title>Comparative genomics and transcriptomics of lineages I, II, and III strains of Listeria monocytogenes.</title>
        <authorList>
            <person name="Hain T."/>
            <person name="Ghai R."/>
            <person name="Billion A."/>
            <person name="Kuenne C.T."/>
            <person name="Steinweg C."/>
            <person name="Izar B."/>
            <person name="Mohamed W."/>
            <person name="Mraheil M."/>
            <person name="Domann E."/>
            <person name="Schaffrath S."/>
            <person name="Karst U."/>
            <person name="Goesmann A."/>
            <person name="Oehm S."/>
            <person name="Puhler A."/>
            <person name="Merkl R."/>
            <person name="Vorwerk S."/>
            <person name="Glaser P."/>
            <person name="Garrido P."/>
            <person name="Rusniok C."/>
            <person name="Buchrieser C."/>
            <person name="Goebel W."/>
            <person name="Chakraborty T."/>
        </authorList>
    </citation>
    <scope>NUCLEOTIDE SEQUENCE [LARGE SCALE GENOMIC DNA]</scope>
    <source>
        <strain>CLIP80459</strain>
    </source>
</reference>
<organism>
    <name type="scientific">Listeria monocytogenes serotype 4b (strain CLIP80459)</name>
    <dbReference type="NCBI Taxonomy" id="568819"/>
    <lineage>
        <taxon>Bacteria</taxon>
        <taxon>Bacillati</taxon>
        <taxon>Bacillota</taxon>
        <taxon>Bacilli</taxon>
        <taxon>Bacillales</taxon>
        <taxon>Listeriaceae</taxon>
        <taxon>Listeria</taxon>
    </lineage>
</organism>